<accession>B4ETL9</accession>
<reference key="1">
    <citation type="journal article" date="2008" name="J. Bacteriol.">
        <title>Complete genome sequence of uropathogenic Proteus mirabilis, a master of both adherence and motility.</title>
        <authorList>
            <person name="Pearson M.M."/>
            <person name="Sebaihia M."/>
            <person name="Churcher C."/>
            <person name="Quail M.A."/>
            <person name="Seshasayee A.S."/>
            <person name="Luscombe N.M."/>
            <person name="Abdellah Z."/>
            <person name="Arrosmith C."/>
            <person name="Atkin B."/>
            <person name="Chillingworth T."/>
            <person name="Hauser H."/>
            <person name="Jagels K."/>
            <person name="Moule S."/>
            <person name="Mungall K."/>
            <person name="Norbertczak H."/>
            <person name="Rabbinowitsch E."/>
            <person name="Walker D."/>
            <person name="Whithead S."/>
            <person name="Thomson N.R."/>
            <person name="Rather P.N."/>
            <person name="Parkhill J."/>
            <person name="Mobley H.L.T."/>
        </authorList>
    </citation>
    <scope>NUCLEOTIDE SEQUENCE [LARGE SCALE GENOMIC DNA]</scope>
    <source>
        <strain>HI4320</strain>
    </source>
</reference>
<comment type="function">
    <text evidence="1">Catalyzes the transfer of the L-Ara4N moiety of the glycolipid undecaprenyl phosphate-alpha-L-Ara4N to lipid A. The modified arabinose is attached to lipid A and is required for resistance to polymyxin and cationic antimicrobial peptides.</text>
</comment>
<comment type="catalytic activity">
    <reaction evidence="1">
        <text>4-amino-4-deoxy-alpha-L-arabinopyranosyl di-trans,octa-cis-undecaprenyl phosphate + lipid IVA = lipid IIA + di-trans,octa-cis-undecaprenyl phosphate.</text>
        <dbReference type="EC" id="2.4.2.43"/>
    </reaction>
</comment>
<comment type="pathway">
    <text evidence="1">Lipopolysaccharide metabolism; 4-amino-4-deoxy-beta-L-arabinose-lipid A biosynthesis.</text>
</comment>
<comment type="subcellular location">
    <subcellularLocation>
        <location evidence="1">Cell inner membrane</location>
        <topology evidence="1">Multi-pass membrane protein</topology>
    </subcellularLocation>
</comment>
<comment type="similarity">
    <text evidence="1">Belongs to the glycosyltransferase 83 family.</text>
</comment>
<evidence type="ECO:0000255" key="1">
    <source>
        <dbReference type="HAMAP-Rule" id="MF_01165"/>
    </source>
</evidence>
<feature type="chain" id="PRO_1000137929" description="Undecaprenyl phosphate-alpha-4-amino-4-deoxy-L-arabinose arabinosyl transferase 2">
    <location>
        <begin position="1"/>
        <end position="553"/>
    </location>
</feature>
<feature type="transmembrane region" description="Helical" evidence="1">
    <location>
        <begin position="6"/>
        <end position="26"/>
    </location>
</feature>
<feature type="transmembrane region" description="Helical" evidence="1">
    <location>
        <begin position="85"/>
        <end position="105"/>
    </location>
</feature>
<feature type="transmembrane region" description="Helical" evidence="1">
    <location>
        <begin position="115"/>
        <end position="135"/>
    </location>
</feature>
<feature type="transmembrane region" description="Helical" evidence="1">
    <location>
        <begin position="137"/>
        <end position="157"/>
    </location>
</feature>
<feature type="transmembrane region" description="Helical" evidence="1">
    <location>
        <begin position="178"/>
        <end position="198"/>
    </location>
</feature>
<feature type="transmembrane region" description="Helical" evidence="1">
    <location>
        <begin position="208"/>
        <end position="228"/>
    </location>
</feature>
<feature type="transmembrane region" description="Helical" evidence="1">
    <location>
        <begin position="261"/>
        <end position="281"/>
    </location>
</feature>
<feature type="transmembrane region" description="Helical" evidence="1">
    <location>
        <begin position="295"/>
        <end position="315"/>
    </location>
</feature>
<feature type="transmembrane region" description="Helical" evidence="1">
    <location>
        <begin position="317"/>
        <end position="337"/>
    </location>
</feature>
<feature type="transmembrane region" description="Helical" evidence="1">
    <location>
        <begin position="352"/>
        <end position="372"/>
    </location>
</feature>
<feature type="transmembrane region" description="Helical" evidence="1">
    <location>
        <begin position="386"/>
        <end position="406"/>
    </location>
</feature>
<feature type="transmembrane region" description="Helical" evidence="1">
    <location>
        <begin position="410"/>
        <end position="430"/>
    </location>
</feature>
<proteinExistence type="inferred from homology"/>
<sequence>MLNNRASKIGAILLALFFVLTYLFPLNSRLLWQPDETRYAEISREMVVSGNWIVPHMLDIRYFEKPIAGYWINNISQLIFGHTNFAVRFGSVISILLSALLIYLLARMMWRNRQVAFVASLIYLSMFLVFSVGTYSVLDPMLALWVTASMVCCFWALKATTAKTRILAWITLGLACGMAFMTKGFLALAIPVIVMIPVTLYQKQFTRMLLYGVLAVLSAALISLPWVLAVAKAEPDYWHYFFWVEHIQRFSGDDAQHSSPFWYYIPIILLGVIPWLGLLPGALTSAWKKRRKRPELFFLLCWFVVPFLFFSIAKGKLPTYMLPFMGPLAMLMAKYGVDCARKFKMKALRINGYINIFIGVAAVVAILIIQLVSSKPIYMPYEWSKWVLAIVAFSLWGIIGYLCSTLNGKHWLWAASCSLGVSLCIGQAIPNSSIDGKLPQEFIRQNIDTLNASKYIVSNSVGVGAGLAWELQRSDIYLYERTGELTYGIEYPDSQHRLLKPESFEQWLENARKEGNVSVVITYKDPKKLAQMPRPEELVTNRRMAILTYEKRK</sequence>
<organism>
    <name type="scientific">Proteus mirabilis (strain HI4320)</name>
    <dbReference type="NCBI Taxonomy" id="529507"/>
    <lineage>
        <taxon>Bacteria</taxon>
        <taxon>Pseudomonadati</taxon>
        <taxon>Pseudomonadota</taxon>
        <taxon>Gammaproteobacteria</taxon>
        <taxon>Enterobacterales</taxon>
        <taxon>Morganellaceae</taxon>
        <taxon>Proteus</taxon>
    </lineage>
</organism>
<gene>
    <name evidence="1" type="primary">arnT2</name>
    <name type="ordered locus">PMI1047</name>
</gene>
<dbReference type="EC" id="2.4.2.43" evidence="1"/>
<dbReference type="EMBL" id="AM942759">
    <property type="protein sequence ID" value="CAR42273.1"/>
    <property type="molecule type" value="Genomic_DNA"/>
</dbReference>
<dbReference type="SMR" id="B4ETL9"/>
<dbReference type="CAZy" id="GT83">
    <property type="family name" value="Glycosyltransferase Family 83"/>
</dbReference>
<dbReference type="EnsemblBacteria" id="CAR42273">
    <property type="protein sequence ID" value="CAR42273"/>
    <property type="gene ID" value="PMI1047"/>
</dbReference>
<dbReference type="GeneID" id="6802570"/>
<dbReference type="KEGG" id="pmr:PMI1047"/>
<dbReference type="PATRIC" id="fig|529507.6.peg.1013"/>
<dbReference type="eggNOG" id="COG1807">
    <property type="taxonomic scope" value="Bacteria"/>
</dbReference>
<dbReference type="HOGENOM" id="CLU_019200_2_1_6"/>
<dbReference type="UniPathway" id="UPA00037"/>
<dbReference type="Proteomes" id="UP000008319">
    <property type="component" value="Chromosome"/>
</dbReference>
<dbReference type="GO" id="GO:0005886">
    <property type="term" value="C:plasma membrane"/>
    <property type="evidence" value="ECO:0007669"/>
    <property type="project" value="UniProtKB-SubCell"/>
</dbReference>
<dbReference type="GO" id="GO:0103015">
    <property type="term" value="F:4-amino-4-deoxy-L-arabinose transferase activity"/>
    <property type="evidence" value="ECO:0007669"/>
    <property type="project" value="UniProtKB-EC"/>
</dbReference>
<dbReference type="GO" id="GO:0000030">
    <property type="term" value="F:mannosyltransferase activity"/>
    <property type="evidence" value="ECO:0007669"/>
    <property type="project" value="InterPro"/>
</dbReference>
<dbReference type="GO" id="GO:0009245">
    <property type="term" value="P:lipid A biosynthetic process"/>
    <property type="evidence" value="ECO:0007669"/>
    <property type="project" value="UniProtKB-UniRule"/>
</dbReference>
<dbReference type="GO" id="GO:0009103">
    <property type="term" value="P:lipopolysaccharide biosynthetic process"/>
    <property type="evidence" value="ECO:0007669"/>
    <property type="project" value="UniProtKB-KW"/>
</dbReference>
<dbReference type="GO" id="GO:0006493">
    <property type="term" value="P:protein O-linked glycosylation"/>
    <property type="evidence" value="ECO:0007669"/>
    <property type="project" value="InterPro"/>
</dbReference>
<dbReference type="GO" id="GO:0010041">
    <property type="term" value="P:response to iron(III) ion"/>
    <property type="evidence" value="ECO:0007669"/>
    <property type="project" value="TreeGrafter"/>
</dbReference>
<dbReference type="HAMAP" id="MF_01165">
    <property type="entry name" value="ArnT_transfer"/>
    <property type="match status" value="1"/>
</dbReference>
<dbReference type="InterPro" id="IPR022839">
    <property type="entry name" value="ArnT_tfrase"/>
</dbReference>
<dbReference type="InterPro" id="IPR003342">
    <property type="entry name" value="Glyco_trans_39/83"/>
</dbReference>
<dbReference type="InterPro" id="IPR050297">
    <property type="entry name" value="LipidA_mod_glycosyltrf_83"/>
</dbReference>
<dbReference type="NCBIfam" id="NF009784">
    <property type="entry name" value="PRK13279.1"/>
    <property type="match status" value="1"/>
</dbReference>
<dbReference type="PANTHER" id="PTHR33908">
    <property type="entry name" value="MANNOSYLTRANSFERASE YKCB-RELATED"/>
    <property type="match status" value="1"/>
</dbReference>
<dbReference type="PANTHER" id="PTHR33908:SF3">
    <property type="entry name" value="UNDECAPRENYL PHOSPHATE-ALPHA-4-AMINO-4-DEOXY-L-ARABINOSE ARABINOSYL TRANSFERASE"/>
    <property type="match status" value="1"/>
</dbReference>
<dbReference type="Pfam" id="PF02366">
    <property type="entry name" value="PMT"/>
    <property type="match status" value="1"/>
</dbReference>
<keyword id="KW-0997">Cell inner membrane</keyword>
<keyword id="KW-1003">Cell membrane</keyword>
<keyword id="KW-0328">Glycosyltransferase</keyword>
<keyword id="KW-0441">Lipid A biosynthesis</keyword>
<keyword id="KW-0444">Lipid biosynthesis</keyword>
<keyword id="KW-0443">Lipid metabolism</keyword>
<keyword id="KW-0448">Lipopolysaccharide biosynthesis</keyword>
<keyword id="KW-0472">Membrane</keyword>
<keyword id="KW-1185">Reference proteome</keyword>
<keyword id="KW-0808">Transferase</keyword>
<keyword id="KW-0812">Transmembrane</keyword>
<keyword id="KW-1133">Transmembrane helix</keyword>
<name>ARNT2_PROMH</name>
<protein>
    <recommendedName>
        <fullName evidence="1">Undecaprenyl phosphate-alpha-4-amino-4-deoxy-L-arabinose arabinosyl transferase 2</fullName>
        <ecNumber evidence="1">2.4.2.43</ecNumber>
    </recommendedName>
    <alternativeName>
        <fullName evidence="1">4-amino-4-deoxy-L-arabinose lipid A transferase 2</fullName>
    </alternativeName>
    <alternativeName>
        <fullName evidence="1">Lipid IV(A) 4-amino-4-deoxy-L-arabinosyltransferase</fullName>
    </alternativeName>
    <alternativeName>
        <fullName evidence="1">Undecaprenyl phosphate-alpha-L-Ara4N transferase 2</fullName>
    </alternativeName>
</protein>